<organism>
    <name type="scientific">Methanococcus maripaludis (strain DSM 14266 / JCM 13030 / NBRC 101832 / S2 / LL)</name>
    <dbReference type="NCBI Taxonomy" id="267377"/>
    <lineage>
        <taxon>Archaea</taxon>
        <taxon>Methanobacteriati</taxon>
        <taxon>Methanobacteriota</taxon>
        <taxon>Methanomada group</taxon>
        <taxon>Methanococci</taxon>
        <taxon>Methanococcales</taxon>
        <taxon>Methanococcaceae</taxon>
        <taxon>Methanococcus</taxon>
    </lineage>
</organism>
<comment type="function">
    <text evidence="1">Catalyzes the transfer of the enolpyruvyl moiety of phosphoenolpyruvate (PEP) to the 5-hydroxyl of shikimate-3-phosphate (S3P) to produce enolpyruvyl shikimate-3-phosphate and inorganic phosphate.</text>
</comment>
<comment type="catalytic activity">
    <reaction evidence="1">
        <text>3-phosphoshikimate + phosphoenolpyruvate = 5-O-(1-carboxyvinyl)-3-phosphoshikimate + phosphate</text>
        <dbReference type="Rhea" id="RHEA:21256"/>
        <dbReference type="ChEBI" id="CHEBI:43474"/>
        <dbReference type="ChEBI" id="CHEBI:57701"/>
        <dbReference type="ChEBI" id="CHEBI:58702"/>
        <dbReference type="ChEBI" id="CHEBI:145989"/>
        <dbReference type="EC" id="2.5.1.19"/>
    </reaction>
    <physiologicalReaction direction="left-to-right" evidence="1">
        <dbReference type="Rhea" id="RHEA:21257"/>
    </physiologicalReaction>
</comment>
<comment type="pathway">
    <text evidence="1">Metabolic intermediate biosynthesis; chorismate biosynthesis.</text>
</comment>
<comment type="subunit">
    <text evidence="1">Monomer.</text>
</comment>
<comment type="subcellular location">
    <subcellularLocation>
        <location evidence="1">Cytoplasm</location>
    </subcellularLocation>
</comment>
<comment type="similarity">
    <text evidence="1">Belongs to the EPSP synthase family.</text>
</comment>
<sequence>MLVVKKTPYIKGILSAPPSKSYTHRAVICASLANGLSNLKNPLNGADCLSSAHACEMFGAEIGLGNEKWIVMGSELKTPDNIVDIGNSGTTLRILTGISSQISNGYTVLTGDDSIRKRPMQPLLDALKQLGLICFSTKNNGTAPIVVKSGKISSNVVEIRGDMSSQFITSLMMTLPFSEDDSEIILTTPLKSEPYLNITIDVLDKFGVKIGKIEEKNKSGYKIKGNQTYKPCDYTIEGDYSSASYLVAAGVLLNSDIVIKNVFKDSKQGDREIIEIVKKMGADVEINDDNVKITGPYELNGIEIDVTDIPDLVPTIAVLGCFAKGKTVVYNGEHVRLKECDRLAACTAELSKMGARIEEKKDGLIITGVHKLNGAKLKTYHDHRLVMAFTIAGMLADGETIIEGEDSVKISFPDFVDKMKSIGSNIKVI</sequence>
<reference key="1">
    <citation type="journal article" date="2004" name="J. Bacteriol.">
        <title>Complete genome sequence of the genetically tractable hydrogenotrophic methanogen Methanococcus maripaludis.</title>
        <authorList>
            <person name="Hendrickson E.L."/>
            <person name="Kaul R."/>
            <person name="Zhou Y."/>
            <person name="Bovee D."/>
            <person name="Chapman P."/>
            <person name="Chung J."/>
            <person name="Conway de Macario E."/>
            <person name="Dodsworth J.A."/>
            <person name="Gillett W."/>
            <person name="Graham D.E."/>
            <person name="Hackett M."/>
            <person name="Haydock A.K."/>
            <person name="Kang A."/>
            <person name="Land M.L."/>
            <person name="Levy R."/>
            <person name="Lie T.J."/>
            <person name="Major T.A."/>
            <person name="Moore B.C."/>
            <person name="Porat I."/>
            <person name="Palmeiri A."/>
            <person name="Rouse G."/>
            <person name="Saenphimmachak C."/>
            <person name="Soell D."/>
            <person name="Van Dien S."/>
            <person name="Wang T."/>
            <person name="Whitman W.B."/>
            <person name="Xia Q."/>
            <person name="Zhang Y."/>
            <person name="Larimer F.W."/>
            <person name="Olson M.V."/>
            <person name="Leigh J.A."/>
        </authorList>
    </citation>
    <scope>NUCLEOTIDE SEQUENCE [LARGE SCALE GENOMIC DNA]</scope>
    <source>
        <strain>DSM 14266 / JCM 13030 / NBRC 101832 / S2 / LL</strain>
    </source>
</reference>
<feature type="chain" id="PRO_0000325403" description="3-phosphoshikimate 1-carboxyvinyltransferase">
    <location>
        <begin position="1"/>
        <end position="429"/>
    </location>
</feature>
<feature type="active site" description="Proton acceptor" evidence="1">
    <location>
        <position position="311"/>
    </location>
</feature>
<feature type="binding site" evidence="1">
    <location>
        <position position="20"/>
    </location>
    <ligand>
        <name>3-phosphoshikimate</name>
        <dbReference type="ChEBI" id="CHEBI:145989"/>
    </ligand>
</feature>
<feature type="binding site" evidence="1">
    <location>
        <position position="20"/>
    </location>
    <ligand>
        <name>phosphoenolpyruvate</name>
        <dbReference type="ChEBI" id="CHEBI:58702"/>
    </ligand>
</feature>
<feature type="binding site" evidence="1">
    <location>
        <position position="21"/>
    </location>
    <ligand>
        <name>3-phosphoshikimate</name>
        <dbReference type="ChEBI" id="CHEBI:145989"/>
    </ligand>
</feature>
<feature type="binding site" evidence="1">
    <location>
        <position position="25"/>
    </location>
    <ligand>
        <name>3-phosphoshikimate</name>
        <dbReference type="ChEBI" id="CHEBI:145989"/>
    </ligand>
</feature>
<feature type="binding site" evidence="1">
    <location>
        <position position="89"/>
    </location>
    <ligand>
        <name>phosphoenolpyruvate</name>
        <dbReference type="ChEBI" id="CHEBI:58702"/>
    </ligand>
</feature>
<feature type="binding site" evidence="1">
    <location>
        <position position="118"/>
    </location>
    <ligand>
        <name>phosphoenolpyruvate</name>
        <dbReference type="ChEBI" id="CHEBI:58702"/>
    </ligand>
</feature>
<feature type="binding site" evidence="1">
    <location>
        <position position="164"/>
    </location>
    <ligand>
        <name>3-phosphoshikimate</name>
        <dbReference type="ChEBI" id="CHEBI:145989"/>
    </ligand>
</feature>
<feature type="binding site" evidence="1">
    <location>
        <position position="165"/>
    </location>
    <ligand>
        <name>3-phosphoshikimate</name>
        <dbReference type="ChEBI" id="CHEBI:145989"/>
    </ligand>
</feature>
<feature type="binding site" evidence="1">
    <location>
        <position position="166"/>
    </location>
    <ligand>
        <name>3-phosphoshikimate</name>
        <dbReference type="ChEBI" id="CHEBI:145989"/>
    </ligand>
</feature>
<feature type="binding site" evidence="1">
    <location>
        <position position="166"/>
    </location>
    <ligand>
        <name>phosphoenolpyruvate</name>
        <dbReference type="ChEBI" id="CHEBI:58702"/>
    </ligand>
</feature>
<feature type="binding site" evidence="1">
    <location>
        <position position="192"/>
    </location>
    <ligand>
        <name>3-phosphoshikimate</name>
        <dbReference type="ChEBI" id="CHEBI:145989"/>
    </ligand>
</feature>
<feature type="binding site" evidence="1">
    <location>
        <position position="311"/>
    </location>
    <ligand>
        <name>3-phosphoshikimate</name>
        <dbReference type="ChEBI" id="CHEBI:145989"/>
    </ligand>
</feature>
<feature type="binding site" evidence="1">
    <location>
        <position position="338"/>
    </location>
    <ligand>
        <name>3-phosphoshikimate</name>
        <dbReference type="ChEBI" id="CHEBI:145989"/>
    </ligand>
</feature>
<feature type="binding site" evidence="1">
    <location>
        <position position="342"/>
    </location>
    <ligand>
        <name>phosphoenolpyruvate</name>
        <dbReference type="ChEBI" id="CHEBI:58702"/>
    </ligand>
</feature>
<feature type="binding site" evidence="1">
    <location>
        <position position="384"/>
    </location>
    <ligand>
        <name>phosphoenolpyruvate</name>
        <dbReference type="ChEBI" id="CHEBI:58702"/>
    </ligand>
</feature>
<keyword id="KW-0028">Amino-acid biosynthesis</keyword>
<keyword id="KW-0057">Aromatic amino acid biosynthesis</keyword>
<keyword id="KW-0963">Cytoplasm</keyword>
<keyword id="KW-1185">Reference proteome</keyword>
<keyword id="KW-0808">Transferase</keyword>
<accession>Q6LXY8</accession>
<protein>
    <recommendedName>
        <fullName evidence="1">3-phosphoshikimate 1-carboxyvinyltransferase</fullName>
        <ecNumber evidence="1">2.5.1.19</ecNumber>
    </recommendedName>
    <alternativeName>
        <fullName evidence="1">5-enolpyruvylshikimate-3-phosphate synthase</fullName>
        <shortName evidence="1">EPSP synthase</shortName>
        <shortName evidence="1">EPSPS</shortName>
    </alternativeName>
</protein>
<dbReference type="EC" id="2.5.1.19" evidence="1"/>
<dbReference type="EMBL" id="BX950229">
    <property type="protein sequence ID" value="CAF30761.1"/>
    <property type="molecule type" value="Genomic_DNA"/>
</dbReference>
<dbReference type="RefSeq" id="WP_011171149.1">
    <property type="nucleotide sequence ID" value="NC_005791.1"/>
</dbReference>
<dbReference type="SMR" id="Q6LXY8"/>
<dbReference type="STRING" id="267377.MMP1205"/>
<dbReference type="EnsemblBacteria" id="CAF30761">
    <property type="protein sequence ID" value="CAF30761"/>
    <property type="gene ID" value="MMP1205"/>
</dbReference>
<dbReference type="GeneID" id="2761037"/>
<dbReference type="KEGG" id="mmp:MMP1205"/>
<dbReference type="PATRIC" id="fig|267377.15.peg.1238"/>
<dbReference type="eggNOG" id="arCOG04134">
    <property type="taxonomic scope" value="Archaea"/>
</dbReference>
<dbReference type="HOGENOM" id="CLU_024321_0_0_2"/>
<dbReference type="OrthoDB" id="43788at2157"/>
<dbReference type="UniPathway" id="UPA00053"/>
<dbReference type="Proteomes" id="UP000000590">
    <property type="component" value="Chromosome"/>
</dbReference>
<dbReference type="GO" id="GO:0005737">
    <property type="term" value="C:cytoplasm"/>
    <property type="evidence" value="ECO:0007669"/>
    <property type="project" value="UniProtKB-SubCell"/>
</dbReference>
<dbReference type="GO" id="GO:0003866">
    <property type="term" value="F:3-phosphoshikimate 1-carboxyvinyltransferase activity"/>
    <property type="evidence" value="ECO:0007669"/>
    <property type="project" value="UniProtKB-UniRule"/>
</dbReference>
<dbReference type="GO" id="GO:0008652">
    <property type="term" value="P:amino acid biosynthetic process"/>
    <property type="evidence" value="ECO:0007669"/>
    <property type="project" value="UniProtKB-KW"/>
</dbReference>
<dbReference type="GO" id="GO:0009073">
    <property type="term" value="P:aromatic amino acid family biosynthetic process"/>
    <property type="evidence" value="ECO:0007669"/>
    <property type="project" value="UniProtKB-KW"/>
</dbReference>
<dbReference type="GO" id="GO:0009423">
    <property type="term" value="P:chorismate biosynthetic process"/>
    <property type="evidence" value="ECO:0007669"/>
    <property type="project" value="UniProtKB-UniRule"/>
</dbReference>
<dbReference type="CDD" id="cd01556">
    <property type="entry name" value="EPSP_synthase"/>
    <property type="match status" value="1"/>
</dbReference>
<dbReference type="FunFam" id="3.65.10.10:FF:000012">
    <property type="entry name" value="Pentafunctional AROM polypeptide"/>
    <property type="match status" value="1"/>
</dbReference>
<dbReference type="Gene3D" id="3.65.10.10">
    <property type="entry name" value="Enolpyruvate transferase domain"/>
    <property type="match status" value="2"/>
</dbReference>
<dbReference type="HAMAP" id="MF_00210">
    <property type="entry name" value="EPSP_synth"/>
    <property type="match status" value="1"/>
</dbReference>
<dbReference type="InterPro" id="IPR001986">
    <property type="entry name" value="Enolpyruvate_Tfrase_dom"/>
</dbReference>
<dbReference type="InterPro" id="IPR036968">
    <property type="entry name" value="Enolpyruvate_Tfrase_sf"/>
</dbReference>
<dbReference type="InterPro" id="IPR006264">
    <property type="entry name" value="EPSP_synthase"/>
</dbReference>
<dbReference type="InterPro" id="IPR023193">
    <property type="entry name" value="EPSP_synthase_CS"/>
</dbReference>
<dbReference type="InterPro" id="IPR013792">
    <property type="entry name" value="RNA3'P_cycl/enolpyr_Trfase_a/b"/>
</dbReference>
<dbReference type="NCBIfam" id="TIGR01356">
    <property type="entry name" value="aroA"/>
    <property type="match status" value="1"/>
</dbReference>
<dbReference type="PANTHER" id="PTHR21090">
    <property type="entry name" value="AROM/DEHYDROQUINATE SYNTHASE"/>
    <property type="match status" value="1"/>
</dbReference>
<dbReference type="PANTHER" id="PTHR21090:SF5">
    <property type="entry name" value="PENTAFUNCTIONAL AROM POLYPEPTIDE"/>
    <property type="match status" value="1"/>
</dbReference>
<dbReference type="Pfam" id="PF00275">
    <property type="entry name" value="EPSP_synthase"/>
    <property type="match status" value="1"/>
</dbReference>
<dbReference type="PIRSF" id="PIRSF000505">
    <property type="entry name" value="EPSPS"/>
    <property type="match status" value="1"/>
</dbReference>
<dbReference type="SUPFAM" id="SSF55205">
    <property type="entry name" value="EPT/RTPC-like"/>
    <property type="match status" value="1"/>
</dbReference>
<dbReference type="PROSITE" id="PS00104">
    <property type="entry name" value="EPSP_SYNTHASE_1"/>
    <property type="match status" value="1"/>
</dbReference>
<dbReference type="PROSITE" id="PS00885">
    <property type="entry name" value="EPSP_SYNTHASE_2"/>
    <property type="match status" value="1"/>
</dbReference>
<name>AROA_METMP</name>
<evidence type="ECO:0000255" key="1">
    <source>
        <dbReference type="HAMAP-Rule" id="MF_00210"/>
    </source>
</evidence>
<proteinExistence type="inferred from homology"/>
<gene>
    <name evidence="1" type="primary">aroA</name>
    <name type="ordered locus">MMP1205</name>
</gene>